<organism>
    <name type="scientific">Oryza sativa subsp. japonica</name>
    <name type="common">Rice</name>
    <dbReference type="NCBI Taxonomy" id="39947"/>
    <lineage>
        <taxon>Eukaryota</taxon>
        <taxon>Viridiplantae</taxon>
        <taxon>Streptophyta</taxon>
        <taxon>Embryophyta</taxon>
        <taxon>Tracheophyta</taxon>
        <taxon>Spermatophyta</taxon>
        <taxon>Magnoliopsida</taxon>
        <taxon>Liliopsida</taxon>
        <taxon>Poales</taxon>
        <taxon>Poaceae</taxon>
        <taxon>BOP clade</taxon>
        <taxon>Oryzoideae</taxon>
        <taxon>Oryzeae</taxon>
        <taxon>Oryzinae</taxon>
        <taxon>Oryza</taxon>
        <taxon>Oryza sativa</taxon>
    </lineage>
</organism>
<reference key="1">
    <citation type="journal article" date="2005" name="Genome Res.">
        <title>Sequence, annotation, and analysis of synteny between rice chromosome 3 and diverged grass species.</title>
        <authorList>
            <consortium name="The rice chromosome 3 sequencing consortium"/>
            <person name="Buell C.R."/>
            <person name="Yuan Q."/>
            <person name="Ouyang S."/>
            <person name="Liu J."/>
            <person name="Zhu W."/>
            <person name="Wang A."/>
            <person name="Maiti R."/>
            <person name="Haas B."/>
            <person name="Wortman J."/>
            <person name="Pertea M."/>
            <person name="Jones K.M."/>
            <person name="Kim M."/>
            <person name="Overton L."/>
            <person name="Tsitrin T."/>
            <person name="Fadrosh D."/>
            <person name="Bera J."/>
            <person name="Weaver B."/>
            <person name="Jin S."/>
            <person name="Johri S."/>
            <person name="Reardon M."/>
            <person name="Webb K."/>
            <person name="Hill J."/>
            <person name="Moffat K."/>
            <person name="Tallon L."/>
            <person name="Van Aken S."/>
            <person name="Lewis M."/>
            <person name="Utterback T."/>
            <person name="Feldblyum T."/>
            <person name="Zismann V."/>
            <person name="Iobst S."/>
            <person name="Hsiao J."/>
            <person name="de Vazeille A.R."/>
            <person name="Salzberg S.L."/>
            <person name="White O."/>
            <person name="Fraser C.M."/>
            <person name="Yu Y."/>
            <person name="Kim H."/>
            <person name="Rambo T."/>
            <person name="Currie J."/>
            <person name="Collura K."/>
            <person name="Kernodle-Thompson S."/>
            <person name="Wei F."/>
            <person name="Kudrna K."/>
            <person name="Ammiraju J.S.S."/>
            <person name="Luo M."/>
            <person name="Goicoechea J.L."/>
            <person name="Wing R.A."/>
            <person name="Henry D."/>
            <person name="Oates R."/>
            <person name="Palmer M."/>
            <person name="Pries G."/>
            <person name="Saski C."/>
            <person name="Simmons J."/>
            <person name="Soderlund C."/>
            <person name="Nelson W."/>
            <person name="de la Bastide M."/>
            <person name="Spiegel L."/>
            <person name="Nascimento L."/>
            <person name="Huang E."/>
            <person name="Preston R."/>
            <person name="Zutavern T."/>
            <person name="Palmer L."/>
            <person name="O'Shaughnessy A."/>
            <person name="Dike S."/>
            <person name="McCombie W.R."/>
            <person name="Minx P."/>
            <person name="Cordum H."/>
            <person name="Wilson R."/>
            <person name="Jin W."/>
            <person name="Lee H.R."/>
            <person name="Jiang J."/>
            <person name="Jackson S."/>
        </authorList>
    </citation>
    <scope>NUCLEOTIDE SEQUENCE [LARGE SCALE GENOMIC DNA]</scope>
    <source>
        <strain>cv. Nipponbare</strain>
    </source>
</reference>
<reference key="2">
    <citation type="journal article" date="2005" name="Nature">
        <title>The map-based sequence of the rice genome.</title>
        <authorList>
            <consortium name="International rice genome sequencing project (IRGSP)"/>
        </authorList>
    </citation>
    <scope>NUCLEOTIDE SEQUENCE [LARGE SCALE GENOMIC DNA]</scope>
    <source>
        <strain>cv. Nipponbare</strain>
    </source>
</reference>
<reference key="3">
    <citation type="journal article" date="2008" name="Nucleic Acids Res.">
        <title>The rice annotation project database (RAP-DB): 2008 update.</title>
        <authorList>
            <consortium name="The rice annotation project (RAP)"/>
        </authorList>
    </citation>
    <scope>GENOME REANNOTATION</scope>
    <source>
        <strain>cv. Nipponbare</strain>
    </source>
</reference>
<reference key="4">
    <citation type="journal article" date="2013" name="Rice">
        <title>Improvement of the Oryza sativa Nipponbare reference genome using next generation sequence and optical map data.</title>
        <authorList>
            <person name="Kawahara Y."/>
            <person name="de la Bastide M."/>
            <person name="Hamilton J.P."/>
            <person name="Kanamori H."/>
            <person name="McCombie W.R."/>
            <person name="Ouyang S."/>
            <person name="Schwartz D.C."/>
            <person name="Tanaka T."/>
            <person name="Wu J."/>
            <person name="Zhou S."/>
            <person name="Childs K.L."/>
            <person name="Davidson R.M."/>
            <person name="Lin H."/>
            <person name="Quesada-Ocampo L."/>
            <person name="Vaillancourt B."/>
            <person name="Sakai H."/>
            <person name="Lee S.S."/>
            <person name="Kim J."/>
            <person name="Numa H."/>
            <person name="Itoh T."/>
            <person name="Buell C.R."/>
            <person name="Matsumoto T."/>
        </authorList>
    </citation>
    <scope>GENOME REANNOTATION</scope>
    <source>
        <strain>cv. Nipponbare</strain>
    </source>
</reference>
<reference key="5">
    <citation type="journal article" date="2003" name="Science">
        <title>Collection, mapping, and annotation of over 28,000 cDNA clones from japonica rice.</title>
        <authorList>
            <consortium name="The rice full-length cDNA consortium"/>
        </authorList>
    </citation>
    <scope>NUCLEOTIDE SEQUENCE [LARGE SCALE MRNA]</scope>
    <source>
        <strain>cv. Nipponbare</strain>
    </source>
</reference>
<dbReference type="EMBL" id="AC104321">
    <property type="protein sequence ID" value="AAO37518.1"/>
    <property type="molecule type" value="Genomic_DNA"/>
</dbReference>
<dbReference type="EMBL" id="DP000009">
    <property type="protein sequence ID" value="ABF99376.1"/>
    <property type="molecule type" value="Genomic_DNA"/>
</dbReference>
<dbReference type="EMBL" id="AP008209">
    <property type="protein sequence ID" value="BAF13493.1"/>
    <property type="molecule type" value="Genomic_DNA"/>
</dbReference>
<dbReference type="EMBL" id="AP014959">
    <property type="protein sequence ID" value="BAS86878.1"/>
    <property type="molecule type" value="Genomic_DNA"/>
</dbReference>
<dbReference type="EMBL" id="AK109922">
    <property type="status" value="NOT_ANNOTATED_CDS"/>
    <property type="molecule type" value="mRNA"/>
</dbReference>
<dbReference type="RefSeq" id="XP_015632847.1">
    <property type="nucleotide sequence ID" value="XM_015777361.1"/>
</dbReference>
<dbReference type="SMR" id="Q851Q6"/>
<dbReference type="FunCoup" id="Q851Q6">
    <property type="interactions" value="24"/>
</dbReference>
<dbReference type="STRING" id="39947.Q851Q6"/>
<dbReference type="PaxDb" id="39947-Q851Q6"/>
<dbReference type="EnsemblPlants" id="Os03t0799700-01">
    <property type="protein sequence ID" value="Os03t0799700-01"/>
    <property type="gene ID" value="Os03g0799700"/>
</dbReference>
<dbReference type="Gramene" id="Os03t0799700-01">
    <property type="protein sequence ID" value="Os03t0799700-01"/>
    <property type="gene ID" value="Os03g0799700"/>
</dbReference>
<dbReference type="KEGG" id="dosa:Os03g0799700"/>
<dbReference type="eggNOG" id="KOG1489">
    <property type="taxonomic scope" value="Eukaryota"/>
</dbReference>
<dbReference type="HOGENOM" id="CLU_011747_2_7_1"/>
<dbReference type="InParanoid" id="Q851Q6"/>
<dbReference type="OMA" id="TNIMRDD"/>
<dbReference type="OrthoDB" id="347018at2759"/>
<dbReference type="Proteomes" id="UP000000763">
    <property type="component" value="Chromosome 3"/>
</dbReference>
<dbReference type="Proteomes" id="UP000059680">
    <property type="component" value="Chromosome 3"/>
</dbReference>
<dbReference type="GO" id="GO:0005739">
    <property type="term" value="C:mitochondrion"/>
    <property type="evidence" value="ECO:0000318"/>
    <property type="project" value="GO_Central"/>
</dbReference>
<dbReference type="GO" id="GO:0005525">
    <property type="term" value="F:GTP binding"/>
    <property type="evidence" value="ECO:0000318"/>
    <property type="project" value="GO_Central"/>
</dbReference>
<dbReference type="GO" id="GO:0003924">
    <property type="term" value="F:GTPase activity"/>
    <property type="evidence" value="ECO:0000318"/>
    <property type="project" value="GO_Central"/>
</dbReference>
<dbReference type="CDD" id="cd01898">
    <property type="entry name" value="Obg"/>
    <property type="match status" value="1"/>
</dbReference>
<dbReference type="Gene3D" id="2.70.210.12">
    <property type="entry name" value="GTP1/OBG domain"/>
    <property type="match status" value="1"/>
</dbReference>
<dbReference type="Gene3D" id="3.40.50.300">
    <property type="entry name" value="P-loop containing nucleotide triphosphate hydrolases"/>
    <property type="match status" value="1"/>
</dbReference>
<dbReference type="InterPro" id="IPR031167">
    <property type="entry name" value="G_OBG"/>
</dbReference>
<dbReference type="InterPro" id="IPR006073">
    <property type="entry name" value="GTP-bd"/>
</dbReference>
<dbReference type="InterPro" id="IPR006074">
    <property type="entry name" value="GTP1-OBG_CS"/>
</dbReference>
<dbReference type="InterPro" id="IPR006169">
    <property type="entry name" value="GTP1_OBG_dom"/>
</dbReference>
<dbReference type="InterPro" id="IPR036726">
    <property type="entry name" value="GTP1_OBG_dom_sf"/>
</dbReference>
<dbReference type="InterPro" id="IPR045086">
    <property type="entry name" value="OBG_GTPase"/>
</dbReference>
<dbReference type="InterPro" id="IPR027417">
    <property type="entry name" value="P-loop_NTPase"/>
</dbReference>
<dbReference type="InterPro" id="IPR005225">
    <property type="entry name" value="Small_GTP-bd"/>
</dbReference>
<dbReference type="NCBIfam" id="TIGR00231">
    <property type="entry name" value="small_GTP"/>
    <property type="match status" value="1"/>
</dbReference>
<dbReference type="PANTHER" id="PTHR11702">
    <property type="entry name" value="DEVELOPMENTALLY REGULATED GTP-BINDING PROTEIN-RELATED"/>
    <property type="match status" value="1"/>
</dbReference>
<dbReference type="PANTHER" id="PTHR11702:SF39">
    <property type="entry name" value="GTP-BINDING PROTEIN OBGC2-RELATED"/>
    <property type="match status" value="1"/>
</dbReference>
<dbReference type="Pfam" id="PF01018">
    <property type="entry name" value="GTP1_OBG"/>
    <property type="match status" value="1"/>
</dbReference>
<dbReference type="Pfam" id="PF01926">
    <property type="entry name" value="MMR_HSR1"/>
    <property type="match status" value="1"/>
</dbReference>
<dbReference type="PRINTS" id="PR00326">
    <property type="entry name" value="GTP1OBG"/>
</dbReference>
<dbReference type="SUPFAM" id="SSF82051">
    <property type="entry name" value="Obg GTP-binding protein N-terminal domain"/>
    <property type="match status" value="1"/>
</dbReference>
<dbReference type="SUPFAM" id="SSF52540">
    <property type="entry name" value="P-loop containing nucleoside triphosphate hydrolases"/>
    <property type="match status" value="1"/>
</dbReference>
<dbReference type="PROSITE" id="PS51710">
    <property type="entry name" value="G_OBG"/>
    <property type="match status" value="1"/>
</dbReference>
<dbReference type="PROSITE" id="PS00905">
    <property type="entry name" value="GTP1_OBG"/>
    <property type="match status" value="1"/>
</dbReference>
<dbReference type="PROSITE" id="PS51883">
    <property type="entry name" value="OBG"/>
    <property type="match status" value="1"/>
</dbReference>
<sequence>MPLLLHPRFPSSHAAACAHRAAAAHRDARPALRLPELHATRRRRNNVACRATRAREAPPQQQNTAAALSKEAHKYFDHAVVTVRAGDGGHGAVLAMPASPSTDAPKSPRRRSDKGKRSGVKKVSYKRNYDGSVALPMGGHGGDVVVYADEAEETLLRFHEKARYCAKRGGNVGATGTLSSRMHNGFAGETLRIPVPVGTVVKRKKGAVLADLAHPGDEVIVARGGQGGISLIDVPEYRRRKAMVLSPNIMRDVSDRVLIHGQPGEEVSLELILRVVADVGLVGLPNAGKSTLLSAITLARPDIADYPFTTLMPNLGRLGGDPALGALQFSSEATLADLPGLIEGAHLGKGLGRNFLRHLRRTRVIVHVVDAAADDPVDDYKIVREELRMYNPQYLERPYVVVLNKIDLPKAQDRLSSLAFEISSIGCEECDGNNTSEDSLNGNTGEHNTSSETKVEGGEKELRDYPRPQAVVGASVLKHIGIDEMLKEIRAALRKCFDHRLPEP</sequence>
<protein>
    <recommendedName>
        <fullName>Probable GTP-binding protein OBGC2</fullName>
    </recommendedName>
</protein>
<accession>Q851Q6</accession>
<accession>A0A0P0W4H4</accession>
<keyword id="KW-0342">GTP-binding</keyword>
<keyword id="KW-0547">Nucleotide-binding</keyword>
<keyword id="KW-1185">Reference proteome</keyword>
<feature type="chain" id="PRO_0000424830" description="Probable GTP-binding protein OBGC2">
    <location>
        <begin position="1"/>
        <end position="504"/>
    </location>
</feature>
<feature type="domain" description="Obg" evidence="3">
    <location>
        <begin position="73"/>
        <end position="276"/>
    </location>
</feature>
<feature type="domain" description="OBG-type G" evidence="2">
    <location>
        <begin position="277"/>
        <end position="494"/>
    </location>
</feature>
<feature type="region of interest" description="Disordered" evidence="4">
    <location>
        <begin position="24"/>
        <end position="46"/>
    </location>
</feature>
<feature type="region of interest" description="Disordered" evidence="4">
    <location>
        <begin position="93"/>
        <end position="122"/>
    </location>
</feature>
<feature type="region of interest" description="Disordered" evidence="4">
    <location>
        <begin position="436"/>
        <end position="463"/>
    </location>
</feature>
<feature type="compositionally biased region" description="Basic and acidic residues" evidence="4">
    <location>
        <begin position="24"/>
        <end position="39"/>
    </location>
</feature>
<feature type="compositionally biased region" description="Basic residues" evidence="4">
    <location>
        <begin position="107"/>
        <end position="122"/>
    </location>
</feature>
<feature type="compositionally biased region" description="Polar residues" evidence="4">
    <location>
        <begin position="436"/>
        <end position="452"/>
    </location>
</feature>
<feature type="compositionally biased region" description="Basic and acidic residues" evidence="4">
    <location>
        <begin position="453"/>
        <end position="463"/>
    </location>
</feature>
<feature type="binding site" evidence="2">
    <location>
        <begin position="283"/>
        <end position="290"/>
    </location>
    <ligand>
        <name>GTP</name>
        <dbReference type="ChEBI" id="CHEBI:37565"/>
    </ligand>
</feature>
<feature type="binding site" evidence="2">
    <location>
        <begin position="337"/>
        <end position="341"/>
    </location>
    <ligand>
        <name>GTP</name>
        <dbReference type="ChEBI" id="CHEBI:37565"/>
    </ligand>
</feature>
<feature type="sequence conflict" description="In Ref. 5; AK109922." evidence="5" ref="5">
    <original>S</original>
    <variation>P</variation>
    <location>
        <position position="99"/>
    </location>
</feature>
<comment type="function">
    <text evidence="1">May bind GTP and have GTPase activity.</text>
</comment>
<comment type="similarity">
    <text evidence="2">Belongs to the TRAFAC class OBG-HflX-like GTPase superfamily. OBG GTPase family.</text>
</comment>
<evidence type="ECO:0000250" key="1"/>
<evidence type="ECO:0000255" key="2">
    <source>
        <dbReference type="PROSITE-ProRule" id="PRU01047"/>
    </source>
</evidence>
<evidence type="ECO:0000255" key="3">
    <source>
        <dbReference type="PROSITE-ProRule" id="PRU01231"/>
    </source>
</evidence>
<evidence type="ECO:0000256" key="4">
    <source>
        <dbReference type="SAM" id="MobiDB-lite"/>
    </source>
</evidence>
<evidence type="ECO:0000305" key="5"/>
<gene>
    <name type="ordered locus">Os03g0799700</name>
    <name type="ordered locus">LOC_Os03g58540</name>
    <name type="ORF">OSJNBa0052F07.17</name>
</gene>
<proteinExistence type="evidence at transcript level"/>
<name>OBGC2_ORYSJ</name>